<feature type="signal peptide" evidence="2">
    <location>
        <begin position="1"/>
        <end position="22"/>
    </location>
</feature>
<feature type="propeptide" id="PRO_0000035001" evidence="1">
    <location>
        <begin position="23"/>
        <end position="46"/>
    </location>
</feature>
<feature type="peptide" id="PRO_0000035002" description="Conotoxin 1">
    <location>
        <begin position="48"/>
        <end position="79"/>
    </location>
</feature>
<feature type="disulfide bond" evidence="1">
    <location>
        <begin position="49"/>
        <end position="62"/>
    </location>
</feature>
<feature type="disulfide bond" evidence="1">
    <location>
        <begin position="56"/>
        <end position="67"/>
    </location>
</feature>
<feature type="disulfide bond" evidence="1">
    <location>
        <begin position="61"/>
        <end position="77"/>
    </location>
</feature>
<reference key="1">
    <citation type="journal article" date="2005" name="Peptides">
        <title>Direct cDNA cloning of novel conopeptide precursors of the O-superfamily.</title>
        <authorList>
            <person name="Kauferstein S."/>
            <person name="Melaun C."/>
            <person name="Mebs D."/>
        </authorList>
    </citation>
    <scope>NUCLEOTIDE SEQUENCE [MRNA]</scope>
    <source>
        <tissue>Venom duct</tissue>
    </source>
</reference>
<dbReference type="EMBL" id="AJ851177">
    <property type="protein sequence ID" value="CAH64850.1"/>
    <property type="molecule type" value="mRNA"/>
</dbReference>
<dbReference type="SMR" id="Q5K0D1"/>
<dbReference type="ConoServer" id="1066">
    <property type="toxin name" value="Conotoxin-1 precursor"/>
</dbReference>
<dbReference type="GO" id="GO:0005576">
    <property type="term" value="C:extracellular region"/>
    <property type="evidence" value="ECO:0007669"/>
    <property type="project" value="UniProtKB-SubCell"/>
</dbReference>
<dbReference type="GO" id="GO:0008200">
    <property type="term" value="F:ion channel inhibitor activity"/>
    <property type="evidence" value="ECO:0007669"/>
    <property type="project" value="InterPro"/>
</dbReference>
<dbReference type="GO" id="GO:0090729">
    <property type="term" value="F:toxin activity"/>
    <property type="evidence" value="ECO:0007669"/>
    <property type="project" value="UniProtKB-KW"/>
</dbReference>
<dbReference type="InterPro" id="IPR004214">
    <property type="entry name" value="Conotoxin"/>
</dbReference>
<dbReference type="Pfam" id="PF02950">
    <property type="entry name" value="Conotoxin"/>
    <property type="match status" value="1"/>
</dbReference>
<name>O161_CONVX</name>
<evidence type="ECO:0000250" key="1"/>
<evidence type="ECO:0000255" key="2"/>
<evidence type="ECO:0000305" key="3"/>
<sequence length="79" mass="8518">MKLTCVLIITVLFLTASQLITADYSRDQRQYRAVRLGDEMRTFKGARDCGEQGQGCYTRPCCPGLHCAAGATGGGSCQP</sequence>
<organism>
    <name type="scientific">Conus vexillum</name>
    <name type="common">Flag cone</name>
    <dbReference type="NCBI Taxonomy" id="89431"/>
    <lineage>
        <taxon>Eukaryota</taxon>
        <taxon>Metazoa</taxon>
        <taxon>Spiralia</taxon>
        <taxon>Lophotrochozoa</taxon>
        <taxon>Mollusca</taxon>
        <taxon>Gastropoda</taxon>
        <taxon>Caenogastropoda</taxon>
        <taxon>Neogastropoda</taxon>
        <taxon>Conoidea</taxon>
        <taxon>Conidae</taxon>
        <taxon>Conus</taxon>
        <taxon>Rhizoconus</taxon>
    </lineage>
</organism>
<protein>
    <recommendedName>
        <fullName>Conotoxin 1</fullName>
    </recommendedName>
</protein>
<keyword id="KW-1015">Disulfide bond</keyword>
<keyword id="KW-0960">Knottin</keyword>
<keyword id="KW-0964">Secreted</keyword>
<keyword id="KW-0732">Signal</keyword>
<keyword id="KW-0800">Toxin</keyword>
<comment type="subcellular location">
    <subcellularLocation>
        <location evidence="1">Secreted</location>
    </subcellularLocation>
</comment>
<comment type="tissue specificity">
    <text>Expressed by the venom duct.</text>
</comment>
<comment type="domain">
    <text evidence="1">The presence of a 'disulfide through disulfide knot' structurally defines this protein as a knottin.</text>
</comment>
<comment type="domain">
    <text>The cysteine framework is VI/VII (C-C-CC-C-C).</text>
</comment>
<comment type="similarity">
    <text evidence="3">Belongs to the conotoxin O1 superfamily.</text>
</comment>
<proteinExistence type="evidence at transcript level"/>
<accession>Q5K0D1</accession>